<dbReference type="EC" id="3.4.-.-" evidence="4"/>
<dbReference type="EMBL" id="HM060633">
    <property type="protein sequence ID" value="ADI96230.1"/>
    <property type="molecule type" value="mRNA"/>
</dbReference>
<dbReference type="EMBL" id="HM060635">
    <property type="protein sequence ID" value="ADI96232.1"/>
    <property type="molecule type" value="mRNA"/>
</dbReference>
<dbReference type="EMBL" id="HM060636">
    <property type="protein sequence ID" value="ADI96233.1"/>
    <property type="molecule type" value="mRNA"/>
</dbReference>
<dbReference type="EMBL" id="HM060638">
    <property type="protein sequence ID" value="ADI96235.1"/>
    <property type="molecule type" value="mRNA"/>
</dbReference>
<dbReference type="SMR" id="D9I2G4"/>
<dbReference type="AGR" id="RGD:1310963"/>
<dbReference type="RGD" id="1310963">
    <property type="gene designation" value="Nlrp1a"/>
</dbReference>
<dbReference type="GO" id="GO:0005829">
    <property type="term" value="C:cytosol"/>
    <property type="evidence" value="ECO:0000266"/>
    <property type="project" value="RGD"/>
</dbReference>
<dbReference type="GO" id="GO:0043025">
    <property type="term" value="C:neuronal cell body"/>
    <property type="evidence" value="ECO:0000314"/>
    <property type="project" value="RGD"/>
</dbReference>
<dbReference type="GO" id="GO:0072558">
    <property type="term" value="C:NLRP1 inflammasome complex"/>
    <property type="evidence" value="ECO:0000266"/>
    <property type="project" value="RGD"/>
</dbReference>
<dbReference type="GO" id="GO:0072559">
    <property type="term" value="C:NLRP3 inflammasome complex"/>
    <property type="evidence" value="ECO:0000318"/>
    <property type="project" value="GO_Central"/>
</dbReference>
<dbReference type="GO" id="GO:0005634">
    <property type="term" value="C:nucleus"/>
    <property type="evidence" value="ECO:0000266"/>
    <property type="project" value="RGD"/>
</dbReference>
<dbReference type="GO" id="GO:0032991">
    <property type="term" value="C:protein-containing complex"/>
    <property type="evidence" value="ECO:0000314"/>
    <property type="project" value="RGD"/>
</dbReference>
<dbReference type="GO" id="GO:0005524">
    <property type="term" value="F:ATP binding"/>
    <property type="evidence" value="ECO:0000266"/>
    <property type="project" value="RGD"/>
</dbReference>
<dbReference type="GO" id="GO:0016887">
    <property type="term" value="F:ATP hydrolysis activity"/>
    <property type="evidence" value="ECO:0000266"/>
    <property type="project" value="RGD"/>
</dbReference>
<dbReference type="GO" id="GO:0140608">
    <property type="term" value="F:cysteine-type endopeptidase activator activity"/>
    <property type="evidence" value="ECO:0000266"/>
    <property type="project" value="RGD"/>
</dbReference>
<dbReference type="GO" id="GO:0003690">
    <property type="term" value="F:double-stranded DNA binding"/>
    <property type="evidence" value="ECO:0000266"/>
    <property type="project" value="RGD"/>
</dbReference>
<dbReference type="GO" id="GO:0003725">
    <property type="term" value="F:double-stranded RNA binding"/>
    <property type="evidence" value="ECO:0000266"/>
    <property type="project" value="RGD"/>
</dbReference>
<dbReference type="GO" id="GO:0019899">
    <property type="term" value="F:enzyme binding"/>
    <property type="evidence" value="ECO:0000266"/>
    <property type="project" value="RGD"/>
</dbReference>
<dbReference type="GO" id="GO:0140693">
    <property type="term" value="F:molecular condensate scaffold activity"/>
    <property type="evidence" value="ECO:0000266"/>
    <property type="project" value="RGD"/>
</dbReference>
<dbReference type="GO" id="GO:0038187">
    <property type="term" value="F:pattern recognition receptor activity"/>
    <property type="evidence" value="ECO:0000266"/>
    <property type="project" value="RGD"/>
</dbReference>
<dbReference type="GO" id="GO:0008233">
    <property type="term" value="F:peptidase activity"/>
    <property type="evidence" value="ECO:0007669"/>
    <property type="project" value="UniProtKB-KW"/>
</dbReference>
<dbReference type="GO" id="GO:0019904">
    <property type="term" value="F:protein domain specific binding"/>
    <property type="evidence" value="ECO:0000266"/>
    <property type="project" value="RGD"/>
</dbReference>
<dbReference type="GO" id="GO:0097110">
    <property type="term" value="F:scaffold protein binding"/>
    <property type="evidence" value="ECO:0000353"/>
    <property type="project" value="RGD"/>
</dbReference>
<dbReference type="GO" id="GO:0035591">
    <property type="term" value="F:signaling adaptor activity"/>
    <property type="evidence" value="ECO:0000266"/>
    <property type="project" value="RGD"/>
</dbReference>
<dbReference type="GO" id="GO:0002218">
    <property type="term" value="P:activation of innate immune response"/>
    <property type="evidence" value="ECO:0000318"/>
    <property type="project" value="GO_Central"/>
</dbReference>
<dbReference type="GO" id="GO:0140374">
    <property type="term" value="P:antiviral innate immune response"/>
    <property type="evidence" value="ECO:0000266"/>
    <property type="project" value="RGD"/>
</dbReference>
<dbReference type="GO" id="GO:0071493">
    <property type="term" value="P:cellular response to UV-B"/>
    <property type="evidence" value="ECO:0000266"/>
    <property type="project" value="RGD"/>
</dbReference>
<dbReference type="GO" id="GO:0042742">
    <property type="term" value="P:defense response to bacterium"/>
    <property type="evidence" value="ECO:0000266"/>
    <property type="project" value="RGD"/>
</dbReference>
<dbReference type="GO" id="GO:0051607">
    <property type="term" value="P:defense response to virus"/>
    <property type="evidence" value="ECO:0000266"/>
    <property type="project" value="RGD"/>
</dbReference>
<dbReference type="GO" id="GO:0006954">
    <property type="term" value="P:inflammatory response"/>
    <property type="evidence" value="ECO:0000318"/>
    <property type="project" value="GO_Central"/>
</dbReference>
<dbReference type="GO" id="GO:0097193">
    <property type="term" value="P:intrinsic apoptotic signaling pathway"/>
    <property type="evidence" value="ECO:0000318"/>
    <property type="project" value="GO_Central"/>
</dbReference>
<dbReference type="GO" id="GO:0051245">
    <property type="term" value="P:negative regulation of cellular defense response"/>
    <property type="evidence" value="ECO:0000315"/>
    <property type="project" value="RGD"/>
</dbReference>
<dbReference type="GO" id="GO:0051402">
    <property type="term" value="P:neuron apoptotic process"/>
    <property type="evidence" value="ECO:0000266"/>
    <property type="project" value="RGD"/>
</dbReference>
<dbReference type="GO" id="GO:1904784">
    <property type="term" value="P:NLRP1 inflammasome complex assembly"/>
    <property type="evidence" value="ECO:0000266"/>
    <property type="project" value="RGD"/>
</dbReference>
<dbReference type="GO" id="GO:0050729">
    <property type="term" value="P:positive regulation of inflammatory response"/>
    <property type="evidence" value="ECO:0000266"/>
    <property type="project" value="RGD"/>
</dbReference>
<dbReference type="GO" id="GO:0032731">
    <property type="term" value="P:positive regulation of interleukin-1 beta production"/>
    <property type="evidence" value="ECO:0000266"/>
    <property type="project" value="RGD"/>
</dbReference>
<dbReference type="GO" id="GO:0140639">
    <property type="term" value="P:positive regulation of pyroptotic inflammatory response"/>
    <property type="evidence" value="ECO:0000315"/>
    <property type="project" value="RGD"/>
</dbReference>
<dbReference type="GO" id="GO:0097300">
    <property type="term" value="P:programmed necrotic cell death"/>
    <property type="evidence" value="ECO:0000266"/>
    <property type="project" value="RGD"/>
</dbReference>
<dbReference type="GO" id="GO:0051260">
    <property type="term" value="P:protein homooligomerization"/>
    <property type="evidence" value="ECO:0000266"/>
    <property type="project" value="RGD"/>
</dbReference>
<dbReference type="GO" id="GO:0070269">
    <property type="term" value="P:pyroptotic inflammatory response"/>
    <property type="evidence" value="ECO:0000266"/>
    <property type="project" value="RGD"/>
</dbReference>
<dbReference type="GO" id="GO:0042981">
    <property type="term" value="P:regulation of apoptotic process"/>
    <property type="evidence" value="ECO:0007669"/>
    <property type="project" value="InterPro"/>
</dbReference>
<dbReference type="GO" id="GO:0050727">
    <property type="term" value="P:regulation of inflammatory response"/>
    <property type="evidence" value="ECO:0000266"/>
    <property type="project" value="RGD"/>
</dbReference>
<dbReference type="GO" id="GO:0032495">
    <property type="term" value="P:response to muramyl dipeptide"/>
    <property type="evidence" value="ECO:0000266"/>
    <property type="project" value="RGD"/>
</dbReference>
<dbReference type="GO" id="GO:0097264">
    <property type="term" value="P:self proteolysis"/>
    <property type="evidence" value="ECO:0000266"/>
    <property type="project" value="RGD"/>
</dbReference>
<dbReference type="GO" id="GO:0007165">
    <property type="term" value="P:signal transduction"/>
    <property type="evidence" value="ECO:0000266"/>
    <property type="project" value="RGD"/>
</dbReference>
<dbReference type="CDD" id="cd08330">
    <property type="entry name" value="CARD_ASC_NALP1"/>
    <property type="match status" value="1"/>
</dbReference>
<dbReference type="FunFam" id="1.10.533.10:FF:000013">
    <property type="entry name" value="Apoptosis-associated speck-like protein containing a CARD"/>
    <property type="match status" value="1"/>
</dbReference>
<dbReference type="FunFam" id="3.40.50.300:FF:000897">
    <property type="entry name" value="NLR family pyrin domain containing 1"/>
    <property type="match status" value="1"/>
</dbReference>
<dbReference type="Gene3D" id="1.10.533.10">
    <property type="entry name" value="Death Domain, Fas"/>
    <property type="match status" value="1"/>
</dbReference>
<dbReference type="Gene3D" id="3.40.50.300">
    <property type="entry name" value="P-loop containing nucleotide triphosphate hydrolases"/>
    <property type="match status" value="1"/>
</dbReference>
<dbReference type="Gene3D" id="3.80.10.10">
    <property type="entry name" value="Ribonuclease Inhibitor"/>
    <property type="match status" value="1"/>
</dbReference>
<dbReference type="InterPro" id="IPR001315">
    <property type="entry name" value="CARD"/>
</dbReference>
<dbReference type="InterPro" id="IPR033516">
    <property type="entry name" value="CARD8/ASC/NALP1_CARD"/>
</dbReference>
<dbReference type="InterPro" id="IPR011029">
    <property type="entry name" value="DEATH-like_dom_sf"/>
</dbReference>
<dbReference type="InterPro" id="IPR025307">
    <property type="entry name" value="FIIND_dom"/>
</dbReference>
<dbReference type="InterPro" id="IPR001611">
    <property type="entry name" value="Leu-rich_rpt"/>
</dbReference>
<dbReference type="InterPro" id="IPR032675">
    <property type="entry name" value="LRR_dom_sf"/>
</dbReference>
<dbReference type="InterPro" id="IPR007111">
    <property type="entry name" value="NACHT_NTPase"/>
</dbReference>
<dbReference type="InterPro" id="IPR041267">
    <property type="entry name" value="NLRP_HD2"/>
</dbReference>
<dbReference type="InterPro" id="IPR051249">
    <property type="entry name" value="NLRP_Inflammasome"/>
</dbReference>
<dbReference type="InterPro" id="IPR041075">
    <property type="entry name" value="NOD1/2_WH"/>
</dbReference>
<dbReference type="InterPro" id="IPR027417">
    <property type="entry name" value="P-loop_NTPase"/>
</dbReference>
<dbReference type="PANTHER" id="PTHR46985">
    <property type="entry name" value="NACHT, LRR AND PYD DOMAINS-CONTAINING PROTEIN 1"/>
    <property type="match status" value="1"/>
</dbReference>
<dbReference type="PANTHER" id="PTHR46985:SF3">
    <property type="entry name" value="NACHT, LRR AND PYD DOMAINS-CONTAINING PROTEIN 1"/>
    <property type="match status" value="1"/>
</dbReference>
<dbReference type="Pfam" id="PF00619">
    <property type="entry name" value="CARD"/>
    <property type="match status" value="1"/>
</dbReference>
<dbReference type="Pfam" id="PF13553">
    <property type="entry name" value="FIIND"/>
    <property type="match status" value="1"/>
</dbReference>
<dbReference type="Pfam" id="PF13516">
    <property type="entry name" value="LRR_6"/>
    <property type="match status" value="2"/>
</dbReference>
<dbReference type="Pfam" id="PF05729">
    <property type="entry name" value="NACHT"/>
    <property type="match status" value="1"/>
</dbReference>
<dbReference type="Pfam" id="PF17776">
    <property type="entry name" value="NLRC4_HD2"/>
    <property type="match status" value="1"/>
</dbReference>
<dbReference type="Pfam" id="PF17779">
    <property type="entry name" value="NOD2_WH"/>
    <property type="match status" value="1"/>
</dbReference>
<dbReference type="Pfam" id="PF23679">
    <property type="entry name" value="UPA-FIIND"/>
    <property type="match status" value="1"/>
</dbReference>
<dbReference type="PRINTS" id="PR00364">
    <property type="entry name" value="DISEASERSIST"/>
</dbReference>
<dbReference type="SMART" id="SM00368">
    <property type="entry name" value="LRR_RI"/>
    <property type="match status" value="3"/>
</dbReference>
<dbReference type="SUPFAM" id="SSF47986">
    <property type="entry name" value="DEATH domain"/>
    <property type="match status" value="1"/>
</dbReference>
<dbReference type="SUPFAM" id="SSF52540">
    <property type="entry name" value="P-loop containing nucleoside triphosphate hydrolases"/>
    <property type="match status" value="1"/>
</dbReference>
<dbReference type="SUPFAM" id="SSF52047">
    <property type="entry name" value="RNI-like"/>
    <property type="match status" value="1"/>
</dbReference>
<dbReference type="PROSITE" id="PS50209">
    <property type="entry name" value="CARD"/>
    <property type="match status" value="1"/>
</dbReference>
<dbReference type="PROSITE" id="PS51830">
    <property type="entry name" value="FIIND"/>
    <property type="match status" value="1"/>
</dbReference>
<dbReference type="PROSITE" id="PS50837">
    <property type="entry name" value="NACHT"/>
    <property type="match status" value="1"/>
</dbReference>
<proteinExistence type="evidence at transcript level"/>
<evidence type="ECO:0000250" key="1">
    <source>
        <dbReference type="UniProtKB" id="D9I2F9"/>
    </source>
</evidence>
<evidence type="ECO:0000250" key="2">
    <source>
        <dbReference type="UniProtKB" id="Q2LKU9"/>
    </source>
</evidence>
<evidence type="ECO:0000250" key="3">
    <source>
        <dbReference type="UniProtKB" id="Q2LKW6"/>
    </source>
</evidence>
<evidence type="ECO:0000250" key="4">
    <source>
        <dbReference type="UniProtKB" id="Q9C000"/>
    </source>
</evidence>
<evidence type="ECO:0000255" key="5"/>
<evidence type="ECO:0000255" key="6">
    <source>
        <dbReference type="PROSITE-ProRule" id="PRU00046"/>
    </source>
</evidence>
<evidence type="ECO:0000255" key="7">
    <source>
        <dbReference type="PROSITE-ProRule" id="PRU00136"/>
    </source>
</evidence>
<evidence type="ECO:0000255" key="8">
    <source>
        <dbReference type="PROSITE-ProRule" id="PRU01174"/>
    </source>
</evidence>
<evidence type="ECO:0000256" key="9">
    <source>
        <dbReference type="SAM" id="MobiDB-lite"/>
    </source>
</evidence>
<evidence type="ECO:0000269" key="10">
    <source>
    </source>
</evidence>
<evidence type="ECO:0000269" key="11">
    <source>
    </source>
</evidence>
<evidence type="ECO:0000303" key="12">
    <source>
    </source>
</evidence>
<evidence type="ECO:0000305" key="13"/>
<evidence type="ECO:0000312" key="14">
    <source>
        <dbReference type="EMBL" id="ADI96230.1"/>
    </source>
</evidence>
<evidence type="ECO:0000312" key="15">
    <source>
        <dbReference type="EMBL" id="ADI96232.1"/>
    </source>
</evidence>
<evidence type="ECO:0000312" key="16">
    <source>
        <dbReference type="EMBL" id="ADI96233.1"/>
    </source>
</evidence>
<evidence type="ECO:0000312" key="17">
    <source>
        <dbReference type="EMBL" id="ADI96235.1"/>
    </source>
</evidence>
<sequence length="1218" mass="138311">MGESQSKQESNTRVAQHGSQQDVDPTFQTKRALERERSSPQVEQSFLGQLQSLLGWSSTSKDVPLSQLIREMDHESRRHSHQSKKKLDRSEHISEGTIPEIYEKRKETISHTQSMEQKYLFQNFTKLLLLQKCCPGGSEKLVRESWHPCVPEEGGHMIEIQDLFDPNLDTEKKPQLVIIEGAAGIGKSTLARQVKRAWEEGQLYRDRFQHVFFFSCRELAQCKQLSLAELIAQGQEVLTAPTRQILSRPEKLLFILDGIDEPAWVLEDQNPELCVHWSQAQPVHTLLGSLLGKSILPEASLMLTARTTALQKLIPSLGQPHRVEVLGFSEFERKDYFYKYFAKERNTIIDFNLIGSIPVLLTLCEVPWVCWLLCTCLEKQMQQGEVLSLTSQTTTALCLKYLSLTIPGQHLSTQLRTLCSLAAEGICQRRTLFSKSDLCKQGLAEDAIATFLKIGVLQRQPSSLSYSFAHLCLQEFFAAMSYILEDSEEARGDMGNDRTVETLVERYGRQNLFEAPTVRFLLGLLNTREMREMENIFACKFPWKTKLKLLRSIVGEPFCQPCHLGLFHCLYENQEEELLTETMLCFPLTASGPNHMEATVFQTNVKRLVIQTDMELMVVTFCITFSHVRSLRLKGKGQQEYKLTAPAMVLYRWTPISEASWKVLFSNLKCTRNLEELDLSGNPLSYSAVRSLCTALRQPGCRLKTLWLVDCGLTSRCCSFLASMLSAHSRLAELDLRLNDLGDNGVRQLCEGLRNPACNLSILRLDQASLSEQVITELRALETKNPKLFISSTWMSHMTMPTENTDGEESLTSSKQQQQQSGDKHMEPLGTDDDFWGPSGPVSTEVVDRERNLYRVRLPMAGSYHCPSTGLHFVVTRAVTIEIGFCAWSQFLHETPLQHSHMVAGPLFDIKAEHGAVTAVCLPHFVSLQEGKVDSSLFHVAHFQDHGMVLETPARVEPHFAVLENPSFSPMGVLLRMIPAVGHFIPITSITLIYYRLYLEDITFHLYLVPNDCTIRKAIDEEELKFQFVRINKPPPVDALYVGSRYIVSSSKEVEILPKELELCYRSPRESQLFSEIYVGNIGSGINLQLTDKKYMNLIWEALLKPGDLRPALPRMASAPKDAPALLHFVDQHREQLVARVTSVDPLLDKLHGLVLSEEDYETVRAEATNQDKMRKLFRGSRSWSWDCKDHFYQALKETHPHLIMDLLEKSGGVSVRL</sequence>
<feature type="chain" id="PRO_0000452890" description="NACHT, LRR and PYD domains-containing protein 1a allele 5">
    <location>
        <begin position="1"/>
        <end position="1218"/>
    </location>
</feature>
<feature type="chain" id="PRO_0000452891" description="NACHT, LRR and PYD domains-containing protein 1a, N-terminus" evidence="4">
    <location>
        <begin position="1"/>
        <end position="968"/>
    </location>
</feature>
<feature type="chain" id="PRO_0000452892" description="NACHT, LRR and PYD domains-containing protein 1a, C-terminus" evidence="4">
    <location>
        <begin position="969"/>
        <end position="1218"/>
    </location>
</feature>
<feature type="domain" description="NACHT" evidence="7">
    <location>
        <begin position="175"/>
        <end position="484"/>
    </location>
</feature>
<feature type="repeat" description="LRR 1" evidence="5">
    <location>
        <begin position="343"/>
        <end position="364"/>
    </location>
</feature>
<feature type="repeat" description="LRR 2" evidence="5">
    <location>
        <begin position="673"/>
        <end position="693"/>
    </location>
</feature>
<feature type="repeat" description="LRR 3" evidence="5">
    <location>
        <begin position="730"/>
        <end position="750"/>
    </location>
</feature>
<feature type="domain" description="FIIND" evidence="8">
    <location>
        <begin position="835"/>
        <end position="1118"/>
    </location>
</feature>
<feature type="domain" description="CARD" evidence="6">
    <location>
        <begin position="1122"/>
        <end position="1211"/>
    </location>
</feature>
<feature type="region of interest" description="Disordered" evidence="9">
    <location>
        <begin position="1"/>
        <end position="44"/>
    </location>
</feature>
<feature type="region of interest" description="Disordered" evidence="9">
    <location>
        <begin position="71"/>
        <end position="91"/>
    </location>
</feature>
<feature type="region of interest" description="Disordered" evidence="9">
    <location>
        <begin position="799"/>
        <end position="842"/>
    </location>
</feature>
<feature type="region of interest" description="ZU5" evidence="4">
    <location>
        <begin position="835"/>
        <end position="968"/>
    </location>
</feature>
<feature type="region of interest" description="UPA" evidence="4">
    <location>
        <begin position="969"/>
        <end position="1118"/>
    </location>
</feature>
<feature type="compositionally biased region" description="Polar residues" evidence="9">
    <location>
        <begin position="1"/>
        <end position="29"/>
    </location>
</feature>
<feature type="compositionally biased region" description="Basic residues" evidence="9">
    <location>
        <begin position="77"/>
        <end position="87"/>
    </location>
</feature>
<feature type="compositionally biased region" description="Polar residues" evidence="9">
    <location>
        <begin position="799"/>
        <end position="815"/>
    </location>
</feature>
<feature type="binding site" evidence="7">
    <location>
        <begin position="181"/>
        <end position="188"/>
    </location>
    <ligand>
        <name>ATP</name>
        <dbReference type="ChEBI" id="CHEBI:30616"/>
    </ligand>
</feature>
<feature type="site" description="Trigger for autolytic processing" evidence="4">
    <location>
        <position position="942"/>
    </location>
</feature>
<feature type="site" description="Cleavage; by autolysis" evidence="8">
    <location>
        <begin position="968"/>
        <end position="969"/>
    </location>
</feature>
<organism>
    <name type="scientific">Rattus norvegicus</name>
    <name type="common">Rat</name>
    <dbReference type="NCBI Taxonomy" id="10116"/>
    <lineage>
        <taxon>Eukaryota</taxon>
        <taxon>Metazoa</taxon>
        <taxon>Chordata</taxon>
        <taxon>Craniata</taxon>
        <taxon>Vertebrata</taxon>
        <taxon>Euteleostomi</taxon>
        <taxon>Mammalia</taxon>
        <taxon>Eutheria</taxon>
        <taxon>Euarchontoglires</taxon>
        <taxon>Glires</taxon>
        <taxon>Rodentia</taxon>
        <taxon>Myomorpha</taxon>
        <taxon>Muroidea</taxon>
        <taxon>Muridae</taxon>
        <taxon>Murinae</taxon>
        <taxon>Rattus</taxon>
    </lineage>
</organism>
<reference key="1">
    <citation type="journal article" date="2010" name="PLoS Pathog.">
        <title>Susceptibility to anthrax lethal toxin-induced rat death is controlled by a single chromosome 10 locus that includes rNlrp1.</title>
        <authorList>
            <person name="Newman Z.L."/>
            <person name="Printz M.P."/>
            <person name="Liu S."/>
            <person name="Crown D."/>
            <person name="Breen L."/>
            <person name="Miller-Randolph S."/>
            <person name="Flodman P."/>
            <person name="Leppla S.H."/>
            <person name="Moayeri M."/>
        </authorList>
    </citation>
    <scope>NUCLEOTIDE SEQUENCE [MRNA]</scope>
    <scope>ACTIVITY REGULATION</scope>
    <source>
        <strain evidence="14">Lewis</strain>
        <strain evidence="15">SHR</strain>
        <strain evidence="16">SHR/Ola</strain>
        <strain evidence="17">Wistar Kyoto</strain>
    </source>
</reference>
<reference key="2">
    <citation type="journal article" date="2019" name="Cell Death Dis.">
        <title>DPP8/9 inhibitors are universal activators of functional NLRP1 alleles.</title>
        <authorList>
            <person name="Gai K."/>
            <person name="Okondo M.C."/>
            <person name="Rao S.D."/>
            <person name="Chui A.J."/>
            <person name="Ball D.P."/>
            <person name="Johnson D.C."/>
            <person name="Bachovchin D.A."/>
        </authorList>
    </citation>
    <scope>FUNCTION</scope>
    <scope>ACTIVITY REGULATION</scope>
</reference>
<reference key="3">
    <citation type="journal article" date="2020" name="Immunol. Rev.">
        <title>The NLRP1 and CARD8 inflammasomes.</title>
        <authorList>
            <person name="Taabazuing C.Y."/>
            <person name="Griswold A.R."/>
            <person name="Bachovchin D.A."/>
        </authorList>
    </citation>
    <scope>REVIEW</scope>
</reference>
<accession>D9I2G4</accession>
<protein>
    <recommendedName>
        <fullName evidence="13">NACHT, LRR and PYD domains-containing protein 1a allele 5</fullName>
        <ecNumber evidence="4">3.4.-.-</ecNumber>
    </recommendedName>
    <component>
        <recommendedName>
            <fullName evidence="13">NACHT, LRR and PYD domains-containing protein 1a, C-terminus</fullName>
            <shortName evidence="4">Nlrp1a-CT</shortName>
        </recommendedName>
    </component>
    <component>
        <recommendedName>
            <fullName evidence="13">NACHT, LRR and PYD domains-containing protein 1a, N-terminus</fullName>
            <shortName evidence="4">Nlrp1a-NT</shortName>
        </recommendedName>
    </component>
</protein>
<name>NL1A5_RAT</name>
<keyword id="KW-0067">ATP-binding</keyword>
<keyword id="KW-0963">Cytoplasm</keyword>
<keyword id="KW-0378">Hydrolase</keyword>
<keyword id="KW-0391">Immunity</keyword>
<keyword id="KW-1271">Inflammasome</keyword>
<keyword id="KW-0395">Inflammatory response</keyword>
<keyword id="KW-0399">Innate immunity</keyword>
<keyword id="KW-0433">Leucine-rich repeat</keyword>
<keyword id="KW-1210">Necrosis</keyword>
<keyword id="KW-0547">Nucleotide-binding</keyword>
<keyword id="KW-0539">Nucleus</keyword>
<keyword id="KW-0645">Protease</keyword>
<keyword id="KW-0677">Repeat</keyword>
<keyword id="KW-0832">Ubl conjugation</keyword>
<gene>
    <name evidence="1" type="primary">Nlrp1a</name>
    <name evidence="12" type="synonym">Nlrp1</name>
</gene>
<comment type="function">
    <text evidence="2 3 4 11">Acts as the sensor component of the Nlrp1a inflammasome, which mediates inflammasome activation in response to various pathogen-associated signals, leading to subsequent pyroptosis (By similarity). Inflammasomes are supramolecular complexes that assemble in the cytosol in response to pathogens and other damage-associated signals and play critical roles in innate immunity and inflammation (By similarity). Acts as a recognition receptor (PRR): recognizes specific pathogens and other damage-associated signals, such as Val-boroPro inhibitor, and mediates the formation of the inflammasome polymeric complex (PubMed:31383852). In response to pathogen-associated signals, the N-terminal part of Nlrp1a is degraded by the proteasome, releasing the cleaved C-terminal part of the protein (NACHT, LRR and PYD domains-containing protein 1a, C-terminus), which polymerizes to initiate the formation of the inflammasome complex: the inflammasome directly recruits pro-caspase-1 (proCASP1) independently of PYCARD/ASC and promotes caspase-1 (CASP1) activation, which subsequently cleaves and activates inflammatory cytokines IL1B and IL18 and gasdermin-D (GSDMD), leading to pyroptosis (By similarity). In the absence of GSDMD expression, the Nlrp1a inflammasome is able to recruit and activate CASP8, leading to activation of gasdermin-E (GSDME) (By similarity).</text>
</comment>
<comment type="function">
    <molecule>NACHT, LRR and PYD domains-containing protein 1a allele 5</molecule>
    <text evidence="4">Constitutes the precursor of the Nlrp1a inflammasome, which mediates autoproteolytic processing within the FIIND domain to generate the N-terminal and C-terminal parts, which are associated non-covalently in absence of pathogens and other damage-associated signals.</text>
</comment>
<comment type="function">
    <molecule>NACHT, LRR and PYD domains-containing protein 1a, N-terminus</molecule>
    <text evidence="4">Regulatory part that prevents formation of the Nlrp1a inflammasome: in absence of pathogens and other damage-associated signals, interacts with the C-terminal part of Nlrp1a (NACHT, LRR and PYD domains-containing protein 1a, C-terminus), preventing activation of the Nlrp1a inflammasome. In response to pathogen-associated signals, this part is ubiquitinated by the N-end rule pathway and degraded by the proteasome, releasing the cleaved C-terminal part of the protein, which polymerizes and forms the Nlrp1a inflammasome.</text>
</comment>
<comment type="function">
    <molecule>NACHT, LRR and PYD domains-containing protein 1a, C-terminus</molecule>
    <text evidence="4">Constitutes the active part of the Nlrp1a inflammasome. In absence of pathogens and other damage-associated signals, interacts with the N-terminal part of Nlrp1a (NACHT, LRR and PYD domains-containing protein 1a, N-terminus), preventing activation of the Nlrp1a inflammasome. In response to pathogen-associated signals, the N-terminal part of Nlrp1a is degraded by the proteasome, releasing this form, which polymerizes to form the Nlrp1a inflammasome complex: the Nlrp1a inflammasome complex then directly recruits pro-caspase-1 (proCASP1) and promotes caspase-1 (CASP1) activation, leading to gasdermin-D (GSDMD) cleavage and subsequent pyroptosis.</text>
</comment>
<comment type="activity regulation">
    <text evidence="1 3 10 11">Activated by pathogens and other damage-associated signals: activation promotes ubiquitination and degradation of the N-terminal part, releasing the cleaved C-terminal part of the protein (NACHT, LRR and PYD domains-containing protein 1a, C-terminus), which polymerizes and forms the Nlrp1a inflammasome (By similarity). Nlrp1a inflammasome is inhibited by DPP8 and DPP9, which sequester the C-terminal fragment of Nlrp1a (NACHT, LRR and PYD domains-containing protein 1a, C-terminus) in a ternary complex, thereby preventing Nlrp1a oligomerization and activation (By similarity). Nlrp1a inflammasome is strongly activated by Val-boroPro (Talabostat, PT-100), an inhibitor of dipeptidyl peptidases DPP8 and DPP9 (PubMed:31383852). Val-boroPro relieves inhibition of DPP8 and/or DPP9 by promoting disruption of the ternary complex, releasing its C-terminal part from autoinhibition (By similarity). Not activated by cleavage by B.anthracis lethal toxin (LT) endopeptidase (PubMed:20502689). Highly activated by Toxoplasma gondii (PubMed:31383852).</text>
</comment>
<comment type="subunit">
    <text evidence="1 4">Interacts (via LRR repeats) with BCL2 and BCL2L1 (via the loop between motifs BH4 and BH3). Interacts with NOD2; this interaction is enhanced in the presence of muramyl dipeptide (MDP) and increases IL1B release. Interacts with EIF2AK2/PKR; this interaction requires EIF2AK2 activity, is accompanied by EIF2AK2 autophosphorylation and promotes inflammasome assembly in response to danger-associated signals. Interacts with MEFV; this interaction targets Nlrp1a to degradation by autophagy, hence preventing excessive IL1B- and IL18-mediated inflammation. Interacts with DPP9; leading to inhibit activation of the inflammasome (By similarity). DPP9 acts via formation of a ternary complex, composed of a DPP9 homodimer, one full-length NLRP1 protein, and one cleaved C-terminus of Nlrp1a (NACHT, LRR and PYD domains-containing protein 1a, C-terminus) (By similarity). Interacts with DPP8; leading to inhibit activation of the inflammasome, probably via formation of a ternary complex with DPP8 (By similarity).</text>
</comment>
<comment type="subunit">
    <molecule>NACHT, LRR and PYD domains-containing protein 1a, N-terminus</molecule>
    <text evidence="4">Interacts with the C-terminal part of Nlrp1a (NACHT, LRR and PYD domains-containing protein 1a, C-terminus) in absence of pathogens and other damage-associated signals.</text>
</comment>
<comment type="subunit">
    <molecule>NACHT, LRR and PYD domains-containing protein 1a, C-terminus</molecule>
    <text evidence="4">Interacts with the N-terminal part of Nlrp1a (NACHT, LRR and PYD domains-containing protein 1a, N-terminus) in absence of pathogens and other damage-associated signals (By similarity). Homomultimer; forms the Nlrp1a inflammasome polymeric complex, a filament composed of homopolymers of this form in response to pathogens and other damage-associated signals (By similarity). The Nlrp1a inflammasome polymeric complex directly recruits pro-caspase-1 (proCASP1) independently of PYCARD/ASC (By similarity). Interacts (via CARD domain) with CASP1 (via CARD domain); leading to CASP1 activation (By similarity).</text>
</comment>
<comment type="subcellular location">
    <subcellularLocation>
        <location evidence="4">Cytoplasm</location>
        <location evidence="4">Cytosol</location>
    </subcellularLocation>
    <subcellularLocation>
        <location evidence="4">Cytoplasm</location>
    </subcellularLocation>
    <subcellularLocation>
        <location evidence="4">Nucleus</location>
    </subcellularLocation>
</comment>
<comment type="subcellular location">
    <molecule>NACHT, LRR and PYD domains-containing protein 1a, C-terminus</molecule>
    <subcellularLocation>
        <location evidence="4">Inflammasome</location>
    </subcellularLocation>
</comment>
<comment type="domain">
    <text evidence="3">The leucine-rich repeat (LRR) domain may be involved in autoinhibition in the absence of activating signal, possibly through intramolecular interaction with the NACHT domain.</text>
</comment>
<comment type="domain">
    <text evidence="3">The FIIND (domain with function to find) region is involved in homomerization, but not in CASP1-binding. Autocatalytic cleavage in this region occurs constitutively, prior to activation signals, and is required for inflammasome activity (IL1B release), possibly by facilitating CASP1 binding. Both N- and C-terminal fragments remain associated.</text>
</comment>
<comment type="domain">
    <molecule>NACHT, LRR and PYD domains-containing protein 1a, C-terminus</molecule>
    <text evidence="4">The C-terminal part of Nlrp1a oligomerizes to form the core of the Nlrp1a inflammasome filament: in the filament, the CARD domains form a central helical filaments that are promoted by oligomerized, but flexibly linked, UPA regions surrounding the filaments. The UPA region reduces the threshold needed for filament formation and signaling.</text>
</comment>
<comment type="PTM">
    <molecule>NACHT, LRR and PYD domains-containing protein 1a allele 5</molecule>
    <text evidence="4">Autocatalytically cleaved. Autocatalytic cleavage in FIIND region occurs constitutively, prior to activation signals, and is required for inflammasome activity (IL1B release), possibly by facilitating CASP1 binding. Both N- and C-terminal parts remain associated non-covalently.</text>
</comment>
<comment type="PTM">
    <molecule>NACHT, LRR and PYD domains-containing protein 1a, N-terminus</molecule>
    <text evidence="4">Ubiquitinated in response to pathogen-associated signals, leading to its degradation by the proteasome and subsequent release of the cleaved C-terminal part of the protein (NACHT, LRR and PYD domains-containing protein 1a, C-terminus), which polymerizes and forms the Nlrp1a inflammasome.</text>
</comment>
<comment type="polymorphism">
    <text evidence="10">Nlrp1a gene is extremely polymorphic. 5 alleles have been described: 1 (AC D9I2F9), 2 (AC D9I2G3), 3 (AC D9I2H0), 4 (AC D9I2G1) and 5 (this entry).</text>
</comment>
<comment type="similarity">
    <text evidence="13">Belongs to the NLRP family.</text>
</comment>